<organism>
    <name type="scientific">Mycoplasma genitalium (strain ATCC 33530 / DSM 19775 / NCTC 10195 / G37)</name>
    <name type="common">Mycoplasmoides genitalium</name>
    <dbReference type="NCBI Taxonomy" id="243273"/>
    <lineage>
        <taxon>Bacteria</taxon>
        <taxon>Bacillati</taxon>
        <taxon>Mycoplasmatota</taxon>
        <taxon>Mycoplasmoidales</taxon>
        <taxon>Mycoplasmoidaceae</taxon>
        <taxon>Mycoplasmoides</taxon>
    </lineage>
</organism>
<proteinExistence type="predicted"/>
<gene>
    <name type="ordered locus">MG211</name>
</gene>
<name>Y211_MYCGE</name>
<dbReference type="EMBL" id="L43967">
    <property type="protein sequence ID" value="AAC71430.1"/>
    <property type="molecule type" value="Genomic_DNA"/>
</dbReference>
<dbReference type="PIR" id="C64223">
    <property type="entry name" value="C64223"/>
</dbReference>
<dbReference type="RefSeq" id="WP_009885750.1">
    <property type="nucleotide sequence ID" value="NC_000908.2"/>
</dbReference>
<dbReference type="SMR" id="P47453"/>
<dbReference type="STRING" id="243273.MG_211"/>
<dbReference type="GeneID" id="88282345"/>
<dbReference type="KEGG" id="mge:MG_211"/>
<dbReference type="eggNOG" id="ENOG5030NHV">
    <property type="taxonomic scope" value="Bacteria"/>
</dbReference>
<dbReference type="HOGENOM" id="CLU_1765977_0_0_14"/>
<dbReference type="InParanoid" id="P47453"/>
<dbReference type="OrthoDB" id="389699at2"/>
<dbReference type="BioCyc" id="MGEN243273:G1GJ2-246-MONOMER"/>
<dbReference type="Proteomes" id="UP000000807">
    <property type="component" value="Chromosome"/>
</dbReference>
<dbReference type="Gene3D" id="6.10.250.660">
    <property type="match status" value="1"/>
</dbReference>
<dbReference type="InterPro" id="IPR027267">
    <property type="entry name" value="AH/BAR_dom_sf"/>
</dbReference>
<dbReference type="InterPro" id="IPR019933">
    <property type="entry name" value="DivIVA_domain"/>
</dbReference>
<dbReference type="NCBIfam" id="TIGR03544">
    <property type="entry name" value="DivI1A_domain"/>
    <property type="match status" value="1"/>
</dbReference>
<dbReference type="SUPFAM" id="SSF103657">
    <property type="entry name" value="BAR/IMD domain-like"/>
    <property type="match status" value="1"/>
</dbReference>
<sequence>MDNKNPQKLITSELLANHRFNFAKDDKGGYDANEVDAFLDQLTKTLIHYEEMKNNEQELKNAYDKLFSDRDQILSRCAKLEADLNTFYENGYANKVLINRVQELEDKLEKLPDRYTEKLERIEKLLKKVIKHWTDGEDISNFEDEFF</sequence>
<accession>P47453</accession>
<feature type="chain" id="PRO_0000210458" description="Uncharacterized protein MG211">
    <location>
        <begin position="1"/>
        <end position="147"/>
    </location>
</feature>
<reference key="1">
    <citation type="journal article" date="1995" name="Science">
        <title>The minimal gene complement of Mycoplasma genitalium.</title>
        <authorList>
            <person name="Fraser C.M."/>
            <person name="Gocayne J.D."/>
            <person name="White O."/>
            <person name="Adams M.D."/>
            <person name="Clayton R.A."/>
            <person name="Fleischmann R.D."/>
            <person name="Bult C.J."/>
            <person name="Kerlavage A.R."/>
            <person name="Sutton G.G."/>
            <person name="Kelley J.M."/>
            <person name="Fritchman J.L."/>
            <person name="Weidman J.F."/>
            <person name="Small K.V."/>
            <person name="Sandusky M."/>
            <person name="Fuhrmann J.L."/>
            <person name="Nguyen D.T."/>
            <person name="Utterback T.R."/>
            <person name="Saudek D.M."/>
            <person name="Phillips C.A."/>
            <person name="Merrick J.M."/>
            <person name="Tomb J.-F."/>
            <person name="Dougherty B.A."/>
            <person name="Bott K.F."/>
            <person name="Hu P.-C."/>
            <person name="Lucier T.S."/>
            <person name="Peterson S.N."/>
            <person name="Smith H.O."/>
            <person name="Hutchison C.A. III"/>
            <person name="Venter J.C."/>
        </authorList>
    </citation>
    <scope>NUCLEOTIDE SEQUENCE [LARGE SCALE GENOMIC DNA]</scope>
    <source>
        <strain>ATCC 33530 / DSM 19775 / NCTC 10195 / G37</strain>
    </source>
</reference>
<protein>
    <recommendedName>
        <fullName>Uncharacterized protein MG211</fullName>
    </recommendedName>
</protein>
<keyword id="KW-1185">Reference proteome</keyword>